<gene>
    <name evidence="1" type="primary">hutP</name>
    <name type="ordered locus">BAA_3740</name>
</gene>
<dbReference type="EMBL" id="CP001598">
    <property type="protein sequence ID" value="ACQ48146.1"/>
    <property type="molecule type" value="Genomic_DNA"/>
</dbReference>
<dbReference type="RefSeq" id="WP_000926516.1">
    <property type="nucleotide sequence ID" value="NC_012659.1"/>
</dbReference>
<dbReference type="SMR" id="C3P4M3"/>
<dbReference type="GeneID" id="93007528"/>
<dbReference type="KEGG" id="bai:BAA_3740"/>
<dbReference type="HOGENOM" id="CLU_148478_0_0_9"/>
<dbReference type="GO" id="GO:0003729">
    <property type="term" value="F:mRNA binding"/>
    <property type="evidence" value="ECO:0007669"/>
    <property type="project" value="UniProtKB-UniRule"/>
</dbReference>
<dbReference type="GO" id="GO:0006547">
    <property type="term" value="P:L-histidine metabolic process"/>
    <property type="evidence" value="ECO:0007669"/>
    <property type="project" value="UniProtKB-UniRule"/>
</dbReference>
<dbReference type="GO" id="GO:0010628">
    <property type="term" value="P:positive regulation of gene expression"/>
    <property type="evidence" value="ECO:0007669"/>
    <property type="project" value="UniProtKB-UniRule"/>
</dbReference>
<dbReference type="FunFam" id="3.40.1510.10:FF:000001">
    <property type="entry name" value="Hut operon positive regulatory protein"/>
    <property type="match status" value="1"/>
</dbReference>
<dbReference type="Gene3D" id="3.40.1510.10">
    <property type="entry name" value="Hut operon regulatory protein HutP"/>
    <property type="match status" value="1"/>
</dbReference>
<dbReference type="HAMAP" id="MF_00779">
    <property type="entry name" value="HutP"/>
    <property type="match status" value="1"/>
</dbReference>
<dbReference type="InterPro" id="IPR015111">
    <property type="entry name" value="Regulatory_HutP"/>
</dbReference>
<dbReference type="InterPro" id="IPR023552">
    <property type="entry name" value="Regulatory_HutP_bacillales"/>
</dbReference>
<dbReference type="InterPro" id="IPR036482">
    <property type="entry name" value="Regulatory_HutP_sf"/>
</dbReference>
<dbReference type="NCBIfam" id="NF002838">
    <property type="entry name" value="PRK03065.1"/>
    <property type="match status" value="1"/>
</dbReference>
<dbReference type="Pfam" id="PF09021">
    <property type="entry name" value="HutP"/>
    <property type="match status" value="1"/>
</dbReference>
<dbReference type="SUPFAM" id="SSF111064">
    <property type="entry name" value="Hut operon positive regulatory protein HutP"/>
    <property type="match status" value="1"/>
</dbReference>
<accession>C3P4M3</accession>
<feature type="chain" id="PRO_1000148457" description="Hut operon positive regulatory protein">
    <location>
        <begin position="1"/>
        <end position="146"/>
    </location>
</feature>
<proteinExistence type="inferred from homology"/>
<protein>
    <recommendedName>
        <fullName evidence="1">Hut operon positive regulatory protein</fullName>
    </recommendedName>
</protein>
<sequence length="146" mass="15822">MLLQGTHRIGRMAMLLALADENESPVLSIPKGWKYCTGKVGSMNSQKVVAAMETAAKSNQVIETDVYRETHALYHAIMEALYGVTRGQIQLADVLRTVGLRFAIVRGTPYDGKKEGEWVAVALYGTIGAPVKGSEHEAIGLGINHI</sequence>
<organism>
    <name type="scientific">Bacillus anthracis (strain A0248)</name>
    <dbReference type="NCBI Taxonomy" id="592021"/>
    <lineage>
        <taxon>Bacteria</taxon>
        <taxon>Bacillati</taxon>
        <taxon>Bacillota</taxon>
        <taxon>Bacilli</taxon>
        <taxon>Bacillales</taxon>
        <taxon>Bacillaceae</taxon>
        <taxon>Bacillus</taxon>
        <taxon>Bacillus cereus group</taxon>
    </lineage>
</organism>
<evidence type="ECO:0000255" key="1">
    <source>
        <dbReference type="HAMAP-Rule" id="MF_00779"/>
    </source>
</evidence>
<name>HUTP_BACAA</name>
<keyword id="KW-0010">Activator</keyword>
<keyword id="KW-0369">Histidine metabolism</keyword>
<keyword id="KW-0694">RNA-binding</keyword>
<keyword id="KW-0804">Transcription</keyword>
<keyword id="KW-0805">Transcription regulation</keyword>
<reference key="1">
    <citation type="submission" date="2009-04" db="EMBL/GenBank/DDBJ databases">
        <title>Genome sequence of Bacillus anthracis A0248.</title>
        <authorList>
            <person name="Dodson R.J."/>
            <person name="Munk A.C."/>
            <person name="Bruce D."/>
            <person name="Detter C."/>
            <person name="Tapia R."/>
            <person name="Sutton G."/>
            <person name="Sims D."/>
            <person name="Brettin T."/>
        </authorList>
    </citation>
    <scope>NUCLEOTIDE SEQUENCE [LARGE SCALE GENOMIC DNA]</scope>
    <source>
        <strain>A0248</strain>
    </source>
</reference>
<comment type="function">
    <text evidence="1">Antiterminator that binds to cis-acting regulatory sequences on the mRNA in the presence of histidine, thereby suppressing transcription termination and activating the hut operon for histidine utilization.</text>
</comment>
<comment type="subunit">
    <text evidence="1">Homohexamer.</text>
</comment>
<comment type="similarity">
    <text evidence="1">Belongs to the HutP family.</text>
</comment>